<protein>
    <recommendedName>
        <fullName>Cap-specific mRNA (nucleoside-2'-O-)-methyltransferase</fullName>
        <ecNumber>2.1.1.57</ecNumber>
    </recommendedName>
    <alternativeName>
        <fullName>Poly(A) polymerase regulatory subunit</fullName>
    </alternativeName>
    <alternativeName>
        <fullName>Poly(A) polymerase small subunit</fullName>
        <shortName>PAP-S</shortName>
    </alternativeName>
    <alternativeName>
        <fullName>VP39</fullName>
    </alternativeName>
</protein>
<sequence>MEPVSMDKPFMYFDEIDDELEYEPESVNETPKKLPHQGQLKLLLGELFFLSKLQRHGILDGSTIVYIGSAPGTHIKYLRDHFMSMGLVIKWMLIDGRTHDPILEGLRDVILITKFVDEAYIRQLKKQLYPSRVILISDVRSKRGQKEPTTQDLLSNYSLQNIMVSVLKPAASSLKWRCPFPDQWIKDFYVPHGNEMLQPFAPSYSAEMRLLSIYSGTPIRLKCITQQDSSKYEKKMYYLNKIIRNRIIINFDYSNQEYDFFHMYHMLKTVYSNKSFTSNKSKVLHFHQSIFRFLKIPITNTEKIHHEPTQRKVPSKNTMLKSRNTKKSVRGNKQGRRT</sequence>
<organismHost>
    <name type="scientific">Oryctolagus cuniculus</name>
    <name type="common">Rabbit</name>
    <dbReference type="NCBI Taxonomy" id="9986"/>
</organismHost>
<proteinExistence type="inferred from homology"/>
<name>MCE_MYXVU</name>
<comment type="function">
    <text evidence="2">Displays methyltransferase, positive regulation of the poly(A) polymerase and transcription elongation activities. Involved in the modification of both mRNA ends and in intermediate and late gene positive transcription elongation. At the mRNAs 5' end, methylates the ribose 2' OH group of the first transcribed nucleotide, thereby producing a 2'-O-methylpurine cap. At the 3' end, functions as a processivity factor which stimulates the activity of the viral poly(A) polymerase OPG063 that creates mRNA's poly(A) tail. In the presence of OPG102, OPG063 does not dissociate from the RNA allowing tail elongation to around 250 adenylates.</text>
</comment>
<comment type="catalytic activity">
    <reaction evidence="2">
        <text>a 5'-end (N(7)-methyl 5'-triphosphoguanosine)-ribonucleoside in mRNA + S-adenosyl-L-methionine = a 5'-end (N(7)-methyl 5'-triphosphoguanosine)-(2'-O-methyl-ribonucleoside) in mRNA + S-adenosyl-L-homocysteine + H(+)</text>
        <dbReference type="Rhea" id="RHEA:67020"/>
        <dbReference type="Rhea" id="RHEA-COMP:17167"/>
        <dbReference type="Rhea" id="RHEA-COMP:17168"/>
        <dbReference type="ChEBI" id="CHEBI:15378"/>
        <dbReference type="ChEBI" id="CHEBI:57856"/>
        <dbReference type="ChEBI" id="CHEBI:59789"/>
        <dbReference type="ChEBI" id="CHEBI:156461"/>
        <dbReference type="ChEBI" id="CHEBI:167609"/>
        <dbReference type="EC" id="2.1.1.57"/>
    </reaction>
</comment>
<comment type="subunit">
    <text evidence="2">Interacts with poly(A) polymerase catalytic subunit OPG063. Interacts with OPG109 and OPG123; these interactions might help linking transcription to capping and polyadenylation.</text>
</comment>
<comment type="subcellular location">
    <subcellularLocation>
        <location evidence="2">Virion</location>
    </subcellularLocation>
    <text evidence="2">Localizes to the virion core.</text>
</comment>
<comment type="similarity">
    <text evidence="3">Belongs to the class I-like SAM-binding methyltransferase superfamily. Poxvirus/kinetoplastid 2'-O-MTase family.</text>
</comment>
<keyword id="KW-0251">Elongation factor</keyword>
<keyword id="KW-0489">Methyltransferase</keyword>
<keyword id="KW-0506">mRNA capping</keyword>
<keyword id="KW-0507">mRNA processing</keyword>
<keyword id="KW-0648">Protein biosynthesis</keyword>
<keyword id="KW-0949">S-adenosyl-L-methionine</keyword>
<keyword id="KW-0804">Transcription</keyword>
<keyword id="KW-0808">Transferase</keyword>
<keyword id="KW-0946">Virion</keyword>
<feature type="chain" id="PRO_0000099117" description="Cap-specific mRNA (nucleoside-2'-O-)-methyltransferase">
    <location>
        <begin position="1"/>
        <end position="338"/>
    </location>
</feature>
<feature type="region of interest" description="Binding to Rap94" evidence="1">
    <location>
        <begin position="169"/>
        <end position="333"/>
    </location>
</feature>
<feature type="region of interest" description="Binding to NPH-I" evidence="3">
    <location>
        <begin position="169"/>
        <end position="249"/>
    </location>
</feature>
<feature type="region of interest" description="Disordered" evidence="4">
    <location>
        <begin position="305"/>
        <end position="338"/>
    </location>
</feature>
<feature type="compositionally biased region" description="Basic residues" evidence="4">
    <location>
        <begin position="323"/>
        <end position="338"/>
    </location>
</feature>
<feature type="active site" description="For methyltransferase activity" evidence="3">
    <location>
        <position position="175"/>
    </location>
</feature>
<feature type="binding site" evidence="3">
    <location>
        <position position="22"/>
    </location>
    <ligand>
        <name>mRNA</name>
        <dbReference type="ChEBI" id="CHEBI:33699"/>
    </ligand>
    <ligandPart>
        <name>mRNA cap</name>
    </ligandPart>
</feature>
<feature type="binding site" evidence="3">
    <location>
        <position position="39"/>
    </location>
    <ligand>
        <name>S-adenosyl-L-methionine</name>
        <dbReference type="ChEBI" id="CHEBI:59789"/>
    </ligand>
</feature>
<feature type="binding site" evidence="3">
    <location>
        <position position="66"/>
    </location>
    <ligand>
        <name>S-adenosyl-L-methionine</name>
        <dbReference type="ChEBI" id="CHEBI:59789"/>
    </ligand>
</feature>
<feature type="binding site" evidence="3">
    <location>
        <position position="68"/>
    </location>
    <ligand>
        <name>S-adenosyl-L-methionine</name>
        <dbReference type="ChEBI" id="CHEBI:59789"/>
    </ligand>
</feature>
<feature type="binding site" evidence="3">
    <location>
        <position position="72"/>
    </location>
    <ligand>
        <name>S-adenosyl-L-methionine</name>
        <dbReference type="ChEBI" id="CHEBI:59789"/>
    </ligand>
</feature>
<feature type="binding site" evidence="3">
    <location>
        <position position="95"/>
    </location>
    <ligand>
        <name>S-adenosyl-L-methionine</name>
        <dbReference type="ChEBI" id="CHEBI:59789"/>
    </ligand>
</feature>
<feature type="binding site" evidence="3">
    <location>
        <position position="97"/>
    </location>
    <ligand>
        <name>S-adenosyl-L-methionine</name>
        <dbReference type="ChEBI" id="CHEBI:59789"/>
    </ligand>
</feature>
<feature type="binding site" evidence="3">
    <location>
        <position position="116"/>
    </location>
    <ligand>
        <name>S-adenosyl-L-methionine</name>
        <dbReference type="ChEBI" id="CHEBI:59789"/>
    </ligand>
</feature>
<feature type="binding site" evidence="3">
    <location>
        <position position="138"/>
    </location>
    <ligand>
        <name>S-adenosyl-L-methionine</name>
        <dbReference type="ChEBI" id="CHEBI:59789"/>
    </ligand>
</feature>
<feature type="binding site" evidence="3">
    <location>
        <begin position="177"/>
        <end position="180"/>
    </location>
    <ligand>
        <name>mRNA</name>
        <dbReference type="ChEBI" id="CHEBI:33699"/>
    </ligand>
    <ligandPart>
        <name>mRNA cap</name>
    </ligandPart>
</feature>
<feature type="binding site" evidence="3">
    <location>
        <position position="182"/>
    </location>
    <ligand>
        <name>mRNA</name>
        <dbReference type="ChEBI" id="CHEBI:33699"/>
    </ligand>
    <ligandPart>
        <name>mRNA cap</name>
    </ligandPart>
</feature>
<feature type="binding site" evidence="3">
    <location>
        <begin position="205"/>
        <end position="207"/>
    </location>
    <ligand>
        <name>mRNA</name>
        <dbReference type="ChEBI" id="CHEBI:33699"/>
    </ligand>
    <ligandPart>
        <name>mRNA cap</name>
    </ligandPart>
</feature>
<feature type="binding site" evidence="3">
    <location>
        <position position="233"/>
    </location>
    <ligand>
        <name>mRNA</name>
        <dbReference type="ChEBI" id="CHEBI:33699"/>
    </ligand>
    <ligandPart>
        <name>mRNA cap</name>
    </ligandPart>
</feature>
<organism>
    <name type="scientific">Myxoma virus (strain Uriarra)</name>
    <name type="common">MYXV</name>
    <dbReference type="NCBI Taxonomy" id="265876"/>
    <lineage>
        <taxon>Viruses</taxon>
        <taxon>Varidnaviria</taxon>
        <taxon>Bamfordvirae</taxon>
        <taxon>Nucleocytoviricota</taxon>
        <taxon>Pokkesviricetes</taxon>
        <taxon>Chitovirales</taxon>
        <taxon>Poxviridae</taxon>
        <taxon>Chordopoxvirinae</taxon>
        <taxon>Leporipoxvirus</taxon>
        <taxon>Myxoma virus</taxon>
    </lineage>
</organism>
<dbReference type="EC" id="2.1.1.57"/>
<dbReference type="EMBL" id="X17347">
    <property type="protein sequence ID" value="CAA35229.1"/>
    <property type="molecule type" value="Genomic_DNA"/>
</dbReference>
<dbReference type="PIR" id="S11241">
    <property type="entry name" value="S11241"/>
</dbReference>
<dbReference type="SMR" id="P68545"/>
<dbReference type="KEGG" id="vg:932114"/>
<dbReference type="GO" id="GO:0044423">
    <property type="term" value="C:virion component"/>
    <property type="evidence" value="ECO:0007669"/>
    <property type="project" value="UniProtKB-KW"/>
</dbReference>
<dbReference type="GO" id="GO:0004483">
    <property type="term" value="F:mRNA (nucleoside-2'-O-)-methyltransferase activity"/>
    <property type="evidence" value="ECO:0007669"/>
    <property type="project" value="UniProtKB-EC"/>
</dbReference>
<dbReference type="GO" id="GO:0006370">
    <property type="term" value="P:7-methylguanosine mRNA capping"/>
    <property type="evidence" value="ECO:0007669"/>
    <property type="project" value="UniProtKB-KW"/>
</dbReference>
<dbReference type="GO" id="GO:0032259">
    <property type="term" value="P:methylation"/>
    <property type="evidence" value="ECO:0007669"/>
    <property type="project" value="UniProtKB-KW"/>
</dbReference>
<dbReference type="GO" id="GO:0031440">
    <property type="term" value="P:regulation of mRNA 3'-end processing"/>
    <property type="evidence" value="ECO:0007669"/>
    <property type="project" value="InterPro"/>
</dbReference>
<dbReference type="CDD" id="cd20756">
    <property type="entry name" value="capping_2-OMTase_Poxviridae"/>
    <property type="match status" value="1"/>
</dbReference>
<dbReference type="Gene3D" id="3.40.50.150">
    <property type="entry name" value="Vaccinia Virus protein VP39"/>
    <property type="match status" value="1"/>
</dbReference>
<dbReference type="InterPro" id="IPR000176">
    <property type="entry name" value="mRNA_MeTrfase-like"/>
</dbReference>
<dbReference type="InterPro" id="IPR025804">
    <property type="entry name" value="Pox/kineto_cap_MeTfrase"/>
</dbReference>
<dbReference type="InterPro" id="IPR030375">
    <property type="entry name" value="Poxvir_cap_MeTfrase"/>
</dbReference>
<dbReference type="InterPro" id="IPR029063">
    <property type="entry name" value="SAM-dependent_MTases_sf"/>
</dbReference>
<dbReference type="Pfam" id="PF01358">
    <property type="entry name" value="PARP_regulatory"/>
    <property type="match status" value="1"/>
</dbReference>
<dbReference type="PIRSF" id="PIRSF003726">
    <property type="entry name" value="PolA_polym_reg_poxV"/>
    <property type="match status" value="1"/>
</dbReference>
<dbReference type="SUPFAM" id="SSF53335">
    <property type="entry name" value="S-adenosyl-L-methionine-dependent methyltransferases"/>
    <property type="match status" value="1"/>
</dbReference>
<dbReference type="PROSITE" id="PS51612">
    <property type="entry name" value="SAM_MT_2O_PK"/>
    <property type="match status" value="1"/>
</dbReference>
<accession>P68545</accession>
<accession>P18628</accession>
<reference key="1">
    <citation type="journal article" date="1990" name="Nucleic Acids Res.">
        <title>A myxoma virus nucleotide sequence with homology to the vaccinia virus RNA polymerase 22-kDa subunit gene.</title>
        <authorList>
            <person name="Jackson R.J."/>
            <person name="Bults G.H."/>
        </authorList>
    </citation>
    <scope>NUCLEOTIDE SEQUENCE [GENOMIC DNA]</scope>
</reference>
<evidence type="ECO:0000250" key="1"/>
<evidence type="ECO:0000250" key="2">
    <source>
        <dbReference type="UniProtKB" id="P07617"/>
    </source>
</evidence>
<evidence type="ECO:0000255" key="3">
    <source>
        <dbReference type="PROSITE-ProRule" id="PRU00944"/>
    </source>
</evidence>
<evidence type="ECO:0000256" key="4">
    <source>
        <dbReference type="SAM" id="MobiDB-lite"/>
    </source>
</evidence>
<gene>
    <name type="primary">OPG102</name>
    <name type="synonym">PAPS</name>
    <name type="ORF">F9</name>
</gene>